<keyword id="KW-0687">Ribonucleoprotein</keyword>
<keyword id="KW-0689">Ribosomal protein</keyword>
<keyword id="KW-0694">RNA-binding</keyword>
<keyword id="KW-0699">rRNA-binding</keyword>
<protein>
    <recommendedName>
        <fullName evidence="1">Small ribosomal subunit protein uS19</fullName>
    </recommendedName>
    <alternativeName>
        <fullName evidence="2">30S ribosomal protein S19</fullName>
    </alternativeName>
</protein>
<comment type="function">
    <text evidence="1">Protein S19 forms a complex with S13 that binds strongly to the 16S ribosomal RNA.</text>
</comment>
<comment type="similarity">
    <text evidence="1">Belongs to the universal ribosomal protein uS19 family.</text>
</comment>
<gene>
    <name evidence="1" type="primary">rpsS</name>
    <name type="ordered locus">cgR_0612</name>
</gene>
<feature type="chain" id="PRO_1000051042" description="Small ribosomal subunit protein uS19">
    <location>
        <begin position="1"/>
        <end position="92"/>
    </location>
</feature>
<evidence type="ECO:0000255" key="1">
    <source>
        <dbReference type="HAMAP-Rule" id="MF_00531"/>
    </source>
</evidence>
<evidence type="ECO:0000305" key="2"/>
<reference key="1">
    <citation type="journal article" date="2007" name="Microbiology">
        <title>Comparative analysis of the Corynebacterium glutamicum group and complete genome sequence of strain R.</title>
        <authorList>
            <person name="Yukawa H."/>
            <person name="Omumasaba C.A."/>
            <person name="Nonaka H."/>
            <person name="Kos P."/>
            <person name="Okai N."/>
            <person name="Suzuki N."/>
            <person name="Suda M."/>
            <person name="Tsuge Y."/>
            <person name="Watanabe J."/>
            <person name="Ikeda Y."/>
            <person name="Vertes A.A."/>
            <person name="Inui M."/>
        </authorList>
    </citation>
    <scope>NUCLEOTIDE SEQUENCE [LARGE SCALE GENOMIC DNA]</scope>
    <source>
        <strain>R</strain>
    </source>
</reference>
<sequence length="92" mass="10460">MPRSLKKGPFVDEHLLNKVDAQNEKGTKQVIKTWSRRSTILPDFIGHTFAVHDGRKHVPVFVDDAMVGHKLGEFAPTKTFKGHVKDDKKGRR</sequence>
<proteinExistence type="inferred from homology"/>
<name>RS19_CORGB</name>
<organism>
    <name type="scientific">Corynebacterium glutamicum (strain R)</name>
    <dbReference type="NCBI Taxonomy" id="340322"/>
    <lineage>
        <taxon>Bacteria</taxon>
        <taxon>Bacillati</taxon>
        <taxon>Actinomycetota</taxon>
        <taxon>Actinomycetes</taxon>
        <taxon>Mycobacteriales</taxon>
        <taxon>Corynebacteriaceae</taxon>
        <taxon>Corynebacterium</taxon>
    </lineage>
</organism>
<dbReference type="EMBL" id="AP009044">
    <property type="protein sequence ID" value="BAF53582.1"/>
    <property type="molecule type" value="Genomic_DNA"/>
</dbReference>
<dbReference type="RefSeq" id="WP_003854296.1">
    <property type="nucleotide sequence ID" value="NC_009342.1"/>
</dbReference>
<dbReference type="SMR" id="A4QBI5"/>
<dbReference type="GeneID" id="1021514"/>
<dbReference type="KEGG" id="cgt:cgR_0612"/>
<dbReference type="HOGENOM" id="CLU_144911_0_1_11"/>
<dbReference type="PhylomeDB" id="A4QBI5"/>
<dbReference type="Proteomes" id="UP000006698">
    <property type="component" value="Chromosome"/>
</dbReference>
<dbReference type="GO" id="GO:0005737">
    <property type="term" value="C:cytoplasm"/>
    <property type="evidence" value="ECO:0007669"/>
    <property type="project" value="UniProtKB-ARBA"/>
</dbReference>
<dbReference type="GO" id="GO:0015935">
    <property type="term" value="C:small ribosomal subunit"/>
    <property type="evidence" value="ECO:0007669"/>
    <property type="project" value="InterPro"/>
</dbReference>
<dbReference type="GO" id="GO:0019843">
    <property type="term" value="F:rRNA binding"/>
    <property type="evidence" value="ECO:0007669"/>
    <property type="project" value="UniProtKB-UniRule"/>
</dbReference>
<dbReference type="GO" id="GO:0003735">
    <property type="term" value="F:structural constituent of ribosome"/>
    <property type="evidence" value="ECO:0007669"/>
    <property type="project" value="InterPro"/>
</dbReference>
<dbReference type="GO" id="GO:0000028">
    <property type="term" value="P:ribosomal small subunit assembly"/>
    <property type="evidence" value="ECO:0007669"/>
    <property type="project" value="TreeGrafter"/>
</dbReference>
<dbReference type="GO" id="GO:0006412">
    <property type="term" value="P:translation"/>
    <property type="evidence" value="ECO:0007669"/>
    <property type="project" value="UniProtKB-UniRule"/>
</dbReference>
<dbReference type="FunFam" id="3.30.860.10:FF:000001">
    <property type="entry name" value="30S ribosomal protein S19"/>
    <property type="match status" value="1"/>
</dbReference>
<dbReference type="Gene3D" id="3.30.860.10">
    <property type="entry name" value="30s Ribosomal Protein S19, Chain A"/>
    <property type="match status" value="1"/>
</dbReference>
<dbReference type="HAMAP" id="MF_00531">
    <property type="entry name" value="Ribosomal_uS19"/>
    <property type="match status" value="1"/>
</dbReference>
<dbReference type="InterPro" id="IPR002222">
    <property type="entry name" value="Ribosomal_uS19"/>
</dbReference>
<dbReference type="InterPro" id="IPR005732">
    <property type="entry name" value="Ribosomal_uS19_bac-type"/>
</dbReference>
<dbReference type="InterPro" id="IPR020934">
    <property type="entry name" value="Ribosomal_uS19_CS"/>
</dbReference>
<dbReference type="InterPro" id="IPR023575">
    <property type="entry name" value="Ribosomal_uS19_SF"/>
</dbReference>
<dbReference type="NCBIfam" id="TIGR01050">
    <property type="entry name" value="rpsS_bact"/>
    <property type="match status" value="1"/>
</dbReference>
<dbReference type="PANTHER" id="PTHR11880">
    <property type="entry name" value="RIBOSOMAL PROTEIN S19P FAMILY MEMBER"/>
    <property type="match status" value="1"/>
</dbReference>
<dbReference type="PANTHER" id="PTHR11880:SF8">
    <property type="entry name" value="SMALL RIBOSOMAL SUBUNIT PROTEIN US19M"/>
    <property type="match status" value="1"/>
</dbReference>
<dbReference type="Pfam" id="PF00203">
    <property type="entry name" value="Ribosomal_S19"/>
    <property type="match status" value="1"/>
</dbReference>
<dbReference type="PIRSF" id="PIRSF002144">
    <property type="entry name" value="Ribosomal_S19"/>
    <property type="match status" value="1"/>
</dbReference>
<dbReference type="PRINTS" id="PR00975">
    <property type="entry name" value="RIBOSOMALS19"/>
</dbReference>
<dbReference type="SUPFAM" id="SSF54570">
    <property type="entry name" value="Ribosomal protein S19"/>
    <property type="match status" value="1"/>
</dbReference>
<dbReference type="PROSITE" id="PS00323">
    <property type="entry name" value="RIBOSOMAL_S19"/>
    <property type="match status" value="1"/>
</dbReference>
<accession>A4QBI5</accession>